<organism>
    <name type="scientific">Mus musculus</name>
    <name type="common">Mouse</name>
    <dbReference type="NCBI Taxonomy" id="10090"/>
    <lineage>
        <taxon>Eukaryota</taxon>
        <taxon>Metazoa</taxon>
        <taxon>Chordata</taxon>
        <taxon>Craniata</taxon>
        <taxon>Vertebrata</taxon>
        <taxon>Euteleostomi</taxon>
        <taxon>Mammalia</taxon>
        <taxon>Eutheria</taxon>
        <taxon>Euarchontoglires</taxon>
        <taxon>Glires</taxon>
        <taxon>Rodentia</taxon>
        <taxon>Myomorpha</taxon>
        <taxon>Muroidea</taxon>
        <taxon>Muridae</taxon>
        <taxon>Murinae</taxon>
        <taxon>Mus</taxon>
        <taxon>Mus</taxon>
    </lineage>
</organism>
<protein>
    <recommendedName>
        <fullName evidence="3">Proline and serine-rich protein 1</fullName>
    </recommendedName>
</protein>
<dbReference type="EMBL" id="AK038404">
    <property type="protein sequence ID" value="BAC29986.1"/>
    <property type="status" value="ALT_INIT"/>
    <property type="molecule type" value="mRNA"/>
</dbReference>
<dbReference type="EMBL" id="AK147998">
    <property type="protein sequence ID" value="BAE28278.1"/>
    <property type="molecule type" value="mRNA"/>
</dbReference>
<dbReference type="EMBL" id="BC051453">
    <property type="protein sequence ID" value="AAH51453.1"/>
    <property type="molecule type" value="mRNA"/>
</dbReference>
<dbReference type="EMBL" id="BC057544">
    <property type="protein sequence ID" value="AAH57544.1"/>
    <property type="molecule type" value="mRNA"/>
</dbReference>
<dbReference type="EMBL" id="BC086674">
    <property type="protein sequence ID" value="AAH86674.1"/>
    <property type="molecule type" value="mRNA"/>
</dbReference>
<dbReference type="CCDS" id="CCDS17346.1"/>
<dbReference type="RefSeq" id="NP_775558.2">
    <property type="nucleotide sequence ID" value="NM_173382.1"/>
</dbReference>
<dbReference type="BioGRID" id="229294">
    <property type="interactions" value="2"/>
</dbReference>
<dbReference type="FunCoup" id="Q5PRE5">
    <property type="interactions" value="317"/>
</dbReference>
<dbReference type="IntAct" id="Q5PRE5">
    <property type="interactions" value="2"/>
</dbReference>
<dbReference type="STRING" id="10090.ENSMUSP00000055253"/>
<dbReference type="GlyGen" id="Q5PRE5">
    <property type="glycosylation" value="12 sites, 1 O-linked glycan (7 sites)"/>
</dbReference>
<dbReference type="iPTMnet" id="Q5PRE5"/>
<dbReference type="PhosphoSitePlus" id="Q5PRE5"/>
<dbReference type="jPOST" id="Q5PRE5"/>
<dbReference type="PaxDb" id="10090-ENSMUSP00000055253"/>
<dbReference type="PeptideAtlas" id="Q5PRE5"/>
<dbReference type="ProteomicsDB" id="291755"/>
<dbReference type="ABCD" id="Q5PRE5">
    <property type="antibodies" value="1 sequenced antibody"/>
</dbReference>
<dbReference type="Antibodypedia" id="67457">
    <property type="antibodies" value="61 antibodies from 15 providers"/>
</dbReference>
<dbReference type="DNASU" id="212127"/>
<dbReference type="Ensembl" id="ENSMUST00000058577.5">
    <property type="protein sequence ID" value="ENSMUSP00000055253.5"/>
    <property type="gene ID" value="ENSMUSG00000049504.13"/>
</dbReference>
<dbReference type="GeneID" id="212127"/>
<dbReference type="KEGG" id="mmu:212127"/>
<dbReference type="UCSC" id="uc008pev.1">
    <property type="organism name" value="mouse"/>
</dbReference>
<dbReference type="AGR" id="MGI:1919933"/>
<dbReference type="CTD" id="80209"/>
<dbReference type="MGI" id="MGI:1919933">
    <property type="gene designation" value="Proser1"/>
</dbReference>
<dbReference type="VEuPathDB" id="HostDB:ENSMUSG00000049504"/>
<dbReference type="eggNOG" id="ENOG502QSVH">
    <property type="taxonomic scope" value="Eukaryota"/>
</dbReference>
<dbReference type="GeneTree" id="ENSGT00730000111188"/>
<dbReference type="HOGENOM" id="CLU_018622_0_0_1"/>
<dbReference type="InParanoid" id="Q5PRE5"/>
<dbReference type="OMA" id="HKVAGYN"/>
<dbReference type="OrthoDB" id="5968166at2759"/>
<dbReference type="PhylomeDB" id="Q5PRE5"/>
<dbReference type="TreeFam" id="TF331494"/>
<dbReference type="BioGRID-ORCS" id="212127">
    <property type="hits" value="1 hit in 60 CRISPR screens"/>
</dbReference>
<dbReference type="ChiTaRS" id="Proser1">
    <property type="organism name" value="mouse"/>
</dbReference>
<dbReference type="PRO" id="PR:Q5PRE5"/>
<dbReference type="Proteomes" id="UP000000589">
    <property type="component" value="Chromosome 3"/>
</dbReference>
<dbReference type="RNAct" id="Q5PRE5">
    <property type="molecule type" value="protein"/>
</dbReference>
<dbReference type="Bgee" id="ENSMUSG00000049504">
    <property type="expression patterns" value="Expressed in ear vesicle and 226 other cell types or tissues"/>
</dbReference>
<dbReference type="InterPro" id="IPR028011">
    <property type="entry name" value="DUF4476"/>
</dbReference>
<dbReference type="InterPro" id="IPR042616">
    <property type="entry name" value="PROSER1"/>
</dbReference>
<dbReference type="PANTHER" id="PTHR14880">
    <property type="entry name" value="PROLINE AND SERINE-RICH PROTEIN 1"/>
    <property type="match status" value="1"/>
</dbReference>
<dbReference type="PANTHER" id="PTHR14880:SF2">
    <property type="entry name" value="PROLINE AND SERINE-RICH PROTEIN 1"/>
    <property type="match status" value="1"/>
</dbReference>
<dbReference type="Pfam" id="PF14771">
    <property type="entry name" value="DUF4476"/>
    <property type="match status" value="2"/>
</dbReference>
<name>PRSR1_MOUSE</name>
<reference key="1">
    <citation type="journal article" date="2005" name="Science">
        <title>The transcriptional landscape of the mammalian genome.</title>
        <authorList>
            <person name="Carninci P."/>
            <person name="Kasukawa T."/>
            <person name="Katayama S."/>
            <person name="Gough J."/>
            <person name="Frith M.C."/>
            <person name="Maeda N."/>
            <person name="Oyama R."/>
            <person name="Ravasi T."/>
            <person name="Lenhard B."/>
            <person name="Wells C."/>
            <person name="Kodzius R."/>
            <person name="Shimokawa K."/>
            <person name="Bajic V.B."/>
            <person name="Brenner S.E."/>
            <person name="Batalov S."/>
            <person name="Forrest A.R."/>
            <person name="Zavolan M."/>
            <person name="Davis M.J."/>
            <person name="Wilming L.G."/>
            <person name="Aidinis V."/>
            <person name="Allen J.E."/>
            <person name="Ambesi-Impiombato A."/>
            <person name="Apweiler R."/>
            <person name="Aturaliya R.N."/>
            <person name="Bailey T.L."/>
            <person name="Bansal M."/>
            <person name="Baxter L."/>
            <person name="Beisel K.W."/>
            <person name="Bersano T."/>
            <person name="Bono H."/>
            <person name="Chalk A.M."/>
            <person name="Chiu K.P."/>
            <person name="Choudhary V."/>
            <person name="Christoffels A."/>
            <person name="Clutterbuck D.R."/>
            <person name="Crowe M.L."/>
            <person name="Dalla E."/>
            <person name="Dalrymple B.P."/>
            <person name="de Bono B."/>
            <person name="Della Gatta G."/>
            <person name="di Bernardo D."/>
            <person name="Down T."/>
            <person name="Engstrom P."/>
            <person name="Fagiolini M."/>
            <person name="Faulkner G."/>
            <person name="Fletcher C.F."/>
            <person name="Fukushima T."/>
            <person name="Furuno M."/>
            <person name="Futaki S."/>
            <person name="Gariboldi M."/>
            <person name="Georgii-Hemming P."/>
            <person name="Gingeras T.R."/>
            <person name="Gojobori T."/>
            <person name="Green R.E."/>
            <person name="Gustincich S."/>
            <person name="Harbers M."/>
            <person name="Hayashi Y."/>
            <person name="Hensch T.K."/>
            <person name="Hirokawa N."/>
            <person name="Hill D."/>
            <person name="Huminiecki L."/>
            <person name="Iacono M."/>
            <person name="Ikeo K."/>
            <person name="Iwama A."/>
            <person name="Ishikawa T."/>
            <person name="Jakt M."/>
            <person name="Kanapin A."/>
            <person name="Katoh M."/>
            <person name="Kawasawa Y."/>
            <person name="Kelso J."/>
            <person name="Kitamura H."/>
            <person name="Kitano H."/>
            <person name="Kollias G."/>
            <person name="Krishnan S.P."/>
            <person name="Kruger A."/>
            <person name="Kummerfeld S.K."/>
            <person name="Kurochkin I.V."/>
            <person name="Lareau L.F."/>
            <person name="Lazarevic D."/>
            <person name="Lipovich L."/>
            <person name="Liu J."/>
            <person name="Liuni S."/>
            <person name="McWilliam S."/>
            <person name="Madan Babu M."/>
            <person name="Madera M."/>
            <person name="Marchionni L."/>
            <person name="Matsuda H."/>
            <person name="Matsuzawa S."/>
            <person name="Miki H."/>
            <person name="Mignone F."/>
            <person name="Miyake S."/>
            <person name="Morris K."/>
            <person name="Mottagui-Tabar S."/>
            <person name="Mulder N."/>
            <person name="Nakano N."/>
            <person name="Nakauchi H."/>
            <person name="Ng P."/>
            <person name="Nilsson R."/>
            <person name="Nishiguchi S."/>
            <person name="Nishikawa S."/>
            <person name="Nori F."/>
            <person name="Ohara O."/>
            <person name="Okazaki Y."/>
            <person name="Orlando V."/>
            <person name="Pang K.C."/>
            <person name="Pavan W.J."/>
            <person name="Pavesi G."/>
            <person name="Pesole G."/>
            <person name="Petrovsky N."/>
            <person name="Piazza S."/>
            <person name="Reed J."/>
            <person name="Reid J.F."/>
            <person name="Ring B.Z."/>
            <person name="Ringwald M."/>
            <person name="Rost B."/>
            <person name="Ruan Y."/>
            <person name="Salzberg S.L."/>
            <person name="Sandelin A."/>
            <person name="Schneider C."/>
            <person name="Schoenbach C."/>
            <person name="Sekiguchi K."/>
            <person name="Semple C.A."/>
            <person name="Seno S."/>
            <person name="Sessa L."/>
            <person name="Sheng Y."/>
            <person name="Shibata Y."/>
            <person name="Shimada H."/>
            <person name="Shimada K."/>
            <person name="Silva D."/>
            <person name="Sinclair B."/>
            <person name="Sperling S."/>
            <person name="Stupka E."/>
            <person name="Sugiura K."/>
            <person name="Sultana R."/>
            <person name="Takenaka Y."/>
            <person name="Taki K."/>
            <person name="Tammoja K."/>
            <person name="Tan S.L."/>
            <person name="Tang S."/>
            <person name="Taylor M.S."/>
            <person name="Tegner J."/>
            <person name="Teichmann S.A."/>
            <person name="Ueda H.R."/>
            <person name="van Nimwegen E."/>
            <person name="Verardo R."/>
            <person name="Wei C.L."/>
            <person name="Yagi K."/>
            <person name="Yamanishi H."/>
            <person name="Zabarovsky E."/>
            <person name="Zhu S."/>
            <person name="Zimmer A."/>
            <person name="Hide W."/>
            <person name="Bult C."/>
            <person name="Grimmond S.M."/>
            <person name="Teasdale R.D."/>
            <person name="Liu E.T."/>
            <person name="Brusic V."/>
            <person name="Quackenbush J."/>
            <person name="Wahlestedt C."/>
            <person name="Mattick J.S."/>
            <person name="Hume D.A."/>
            <person name="Kai C."/>
            <person name="Sasaki D."/>
            <person name="Tomaru Y."/>
            <person name="Fukuda S."/>
            <person name="Kanamori-Katayama M."/>
            <person name="Suzuki M."/>
            <person name="Aoki J."/>
            <person name="Arakawa T."/>
            <person name="Iida J."/>
            <person name="Imamura K."/>
            <person name="Itoh M."/>
            <person name="Kato T."/>
            <person name="Kawaji H."/>
            <person name="Kawagashira N."/>
            <person name="Kawashima T."/>
            <person name="Kojima M."/>
            <person name="Kondo S."/>
            <person name="Konno H."/>
            <person name="Nakano K."/>
            <person name="Ninomiya N."/>
            <person name="Nishio T."/>
            <person name="Okada M."/>
            <person name="Plessy C."/>
            <person name="Shibata K."/>
            <person name="Shiraki T."/>
            <person name="Suzuki S."/>
            <person name="Tagami M."/>
            <person name="Waki K."/>
            <person name="Watahiki A."/>
            <person name="Okamura-Oho Y."/>
            <person name="Suzuki H."/>
            <person name="Kawai J."/>
            <person name="Hayashizaki Y."/>
        </authorList>
    </citation>
    <scope>NUCLEOTIDE SEQUENCE [LARGE SCALE MRNA]</scope>
    <source>
        <strain>C57BL/6J</strain>
        <tissue>Hypothalamus</tissue>
    </source>
</reference>
<reference key="2">
    <citation type="journal article" date="2004" name="Genome Res.">
        <title>The status, quality, and expansion of the NIH full-length cDNA project: the Mammalian Gene Collection (MGC).</title>
        <authorList>
            <consortium name="The MGC Project Team"/>
        </authorList>
    </citation>
    <scope>NUCLEOTIDE SEQUENCE [LARGE SCALE MRNA]</scope>
    <source>
        <strain>C57BL/6J</strain>
        <tissue>Eye</tissue>
        <tissue>Fetal brain</tissue>
        <tissue>Head</tissue>
    </source>
</reference>
<reference key="3">
    <citation type="journal article" date="2009" name="Immunity">
        <title>The phagosomal proteome in interferon-gamma-activated macrophages.</title>
        <authorList>
            <person name="Trost M."/>
            <person name="English L."/>
            <person name="Lemieux S."/>
            <person name="Courcelles M."/>
            <person name="Desjardins M."/>
            <person name="Thibault P."/>
        </authorList>
    </citation>
    <scope>IDENTIFICATION BY MASS SPECTROMETRY [LARGE SCALE ANALYSIS]</scope>
</reference>
<proteinExistence type="evidence at protein level"/>
<sequence>MDKKSFETVLDEIRKAVLTEYKLKAIEYVHGYFSSEQVVDLLRYFSWAEPQLKAMKALQHKMVAVHPAEVVSILSCFTFSKDKLAALELLASNIVDAQNSRPIEDLFRINMSEKKRCKRVLEQASKAGCKAPHAMISSCGTFPGNPYPKGKPSRINGIFPGTPLKKDGEEITNEGKGIAARILGPSKPPPSTYNPHKPVPYPIPPCRPHATIAPSAYNNAGLVPLANVIAPGVPPPPPYTPNPAGTDNEDLSSQSKPTQSQTFSTPASQLFSPHGSSNPSTPAATPVPAVSPAKAVNHPSVSAAATGAGMSATNTALAVFPTPQPNTPNPTVIRTPSVPATPVTSTHSTTPTPVPSVFSGLVPLPGLSATPTLPTQASSISRVTLASSETFASTCAPFSGHSSASSTAGSASNPITAPLSSVFAGLPLPFPPASHSIATPTPSVIASAAGPHGVNSPLLSALKGFLTSNDTHLINSSALPSAVTSGLASLSSLPNRNSDSPASATNKCYPPAAVPAAQRSSTPGLAMFPGLQSPVASATSVAPTLPAQSPLATPSTAVPVSCGSSGSLLHGPHAGGISSAPAAATMPVMIKSEPTSPPPSAFKGPAHPGTPVRGTLGLSGALGRGYPTTSVPISVSTCLNPALSGLSSLSTPLAGSMSLPPHASSTPIAPVFTALPPFTSLTNSFPLPGSPSLNPAVSLAGSSTTTTSAAVHPSSATVRSVLPTSNASPAAFPLNLSTAVPSLFAVTQGPLPTSNPSYPGFPVSSAPSGAPTLPSFPGLQAPSTVAVTPLPVAASAPSPAPVLPGFASAFSSNFNSALVAQAGLSSGLQAAGSSVFPGLLSLPGIPGFSQAPPQSSLQELQHSAAAQSALLQQVHSASALESYPAQADGFPSYPSTPGTPFSLQTGLSQSGWQ</sequence>
<accession>Q5PRE5</accession>
<accession>Q3UGD1</accession>
<accession>Q6PFH9</accession>
<accession>Q80WX5</accession>
<accession>Q8BYT2</accession>
<keyword id="KW-0007">Acetylation</keyword>
<keyword id="KW-1185">Reference proteome</keyword>
<feature type="chain" id="PRO_0000274310" description="Proline and serine-rich protein 1">
    <location>
        <begin position="1"/>
        <end position="913"/>
    </location>
</feature>
<feature type="region of interest" description="Disordered" evidence="2">
    <location>
        <begin position="233"/>
        <end position="291"/>
    </location>
</feature>
<feature type="region of interest" description="Disordered" evidence="2">
    <location>
        <begin position="488"/>
        <end position="507"/>
    </location>
</feature>
<feature type="region of interest" description="Disordered" evidence="2">
    <location>
        <begin position="592"/>
        <end position="618"/>
    </location>
</feature>
<feature type="region of interest" description="Disordered" evidence="2">
    <location>
        <begin position="888"/>
        <end position="913"/>
    </location>
</feature>
<feature type="compositionally biased region" description="Polar residues" evidence="2">
    <location>
        <begin position="251"/>
        <end position="275"/>
    </location>
</feature>
<feature type="compositionally biased region" description="Low complexity" evidence="2">
    <location>
        <begin position="276"/>
        <end position="291"/>
    </location>
</feature>
<feature type="compositionally biased region" description="Polar residues" evidence="2">
    <location>
        <begin position="488"/>
        <end position="506"/>
    </location>
</feature>
<feature type="compositionally biased region" description="Polar residues" evidence="2">
    <location>
        <begin position="893"/>
        <end position="913"/>
    </location>
</feature>
<feature type="modified residue" description="N-acetylmethionine" evidence="1">
    <location>
        <position position="1"/>
    </location>
</feature>
<evidence type="ECO:0000250" key="1">
    <source>
        <dbReference type="UniProtKB" id="Q86XN7"/>
    </source>
</evidence>
<evidence type="ECO:0000256" key="2">
    <source>
        <dbReference type="SAM" id="MobiDB-lite"/>
    </source>
</evidence>
<evidence type="ECO:0000305" key="3"/>
<evidence type="ECO:0000312" key="4">
    <source>
        <dbReference type="MGI" id="MGI:1919933"/>
    </source>
</evidence>
<gene>
    <name evidence="4" type="primary">Proser1</name>
</gene>
<comment type="function">
    <text evidence="1">Mediates OGT interaction with and O-GlcNAcylation of TET2 to control TET2 stabilization at enhancers and CpG islands (CGIs).</text>
</comment>
<comment type="subunit">
    <text evidence="1">Interacts with TET2 and OGT; this interaction mediates TET2 O-GlcNAcylation and stability by promoting the interaction between OGT and TET2. Interacts with KDM6A. Interacts with TET1.</text>
</comment>
<comment type="PTM">
    <text evidence="1">Glycosylated. Interaction with OGT leads to GlcNAcylation.</text>
</comment>
<comment type="sequence caution" evidence="3">
    <conflict type="erroneous initiation">
        <sequence resource="EMBL-CDS" id="BAC29986"/>
    </conflict>
    <text>Truncated N-terminus.</text>
</comment>